<proteinExistence type="evidence at protein level"/>
<gene>
    <name evidence="14" type="primary">GGT7</name>
    <name type="synonym">GGTL3</name>
    <name type="synonym">GGTL5</name>
</gene>
<evidence type="ECO:0000250" key="1"/>
<evidence type="ECO:0000250" key="2">
    <source>
        <dbReference type="UniProtKB" id="P07314"/>
    </source>
</evidence>
<evidence type="ECO:0000250" key="3">
    <source>
        <dbReference type="UniProtKB" id="P19440"/>
    </source>
</evidence>
<evidence type="ECO:0000250" key="4">
    <source>
        <dbReference type="UniProtKB" id="Q99JP7"/>
    </source>
</evidence>
<evidence type="ECO:0000250" key="5">
    <source>
        <dbReference type="UniProtKB" id="Q99MZ4"/>
    </source>
</evidence>
<evidence type="ECO:0000255" key="6"/>
<evidence type="ECO:0000256" key="7">
    <source>
        <dbReference type="SAM" id="MobiDB-lite"/>
    </source>
</evidence>
<evidence type="ECO:0000269" key="8">
    <source>
    </source>
</evidence>
<evidence type="ECO:0000303" key="9">
    <source>
    </source>
</evidence>
<evidence type="ECO:0000303" key="10">
    <source>
    </source>
</evidence>
<evidence type="ECO:0000303" key="11">
    <source>
    </source>
</evidence>
<evidence type="ECO:0000303" key="12">
    <source>
    </source>
</evidence>
<evidence type="ECO:0000305" key="13"/>
<evidence type="ECO:0000312" key="14">
    <source>
        <dbReference type="HGNC" id="HGNC:4259"/>
    </source>
</evidence>
<evidence type="ECO:0007744" key="15">
    <source>
    </source>
</evidence>
<organism>
    <name type="scientific">Homo sapiens</name>
    <name type="common">Human</name>
    <dbReference type="NCBI Taxonomy" id="9606"/>
    <lineage>
        <taxon>Eukaryota</taxon>
        <taxon>Metazoa</taxon>
        <taxon>Chordata</taxon>
        <taxon>Craniata</taxon>
        <taxon>Vertebrata</taxon>
        <taxon>Euteleostomi</taxon>
        <taxon>Mammalia</taxon>
        <taxon>Eutheria</taxon>
        <taxon>Euarchontoglires</taxon>
        <taxon>Primates</taxon>
        <taxon>Haplorrhini</taxon>
        <taxon>Catarrhini</taxon>
        <taxon>Hominidae</taxon>
        <taxon>Homo</taxon>
    </lineage>
</organism>
<comment type="function">
    <text evidence="3">Hydrolyzes and transfers gamma-glutamyl moieties from glutathione and other gamma-glutamyl compounds to acceptors.</text>
</comment>
<comment type="catalytic activity">
    <reaction evidence="3">
        <text>an N-terminal (5-L-glutamyl)-[peptide] + an alpha-amino acid = 5-L-glutamyl amino acid + an N-terminal L-alpha-aminoacyl-[peptide]</text>
        <dbReference type="Rhea" id="RHEA:23904"/>
        <dbReference type="Rhea" id="RHEA-COMP:9780"/>
        <dbReference type="Rhea" id="RHEA-COMP:9795"/>
        <dbReference type="ChEBI" id="CHEBI:77644"/>
        <dbReference type="ChEBI" id="CHEBI:78597"/>
        <dbReference type="ChEBI" id="CHEBI:78599"/>
        <dbReference type="ChEBI" id="CHEBI:78608"/>
        <dbReference type="EC" id="2.3.2.2"/>
    </reaction>
    <physiologicalReaction direction="left-to-right" evidence="3">
        <dbReference type="Rhea" id="RHEA:23905"/>
    </physiologicalReaction>
</comment>
<comment type="catalytic activity">
    <reaction evidence="3">
        <text>glutathione + H2O = L-cysteinylglycine + L-glutamate</text>
        <dbReference type="Rhea" id="RHEA:28807"/>
        <dbReference type="ChEBI" id="CHEBI:15377"/>
        <dbReference type="ChEBI" id="CHEBI:29985"/>
        <dbReference type="ChEBI" id="CHEBI:57925"/>
        <dbReference type="ChEBI" id="CHEBI:61694"/>
        <dbReference type="EC" id="3.4.19.13"/>
    </reaction>
    <physiologicalReaction direction="left-to-right" evidence="3">
        <dbReference type="Rhea" id="RHEA:28808"/>
    </physiologicalReaction>
</comment>
<comment type="catalytic activity">
    <reaction evidence="3">
        <text>an S-substituted glutathione + H2O = an S-substituted L-cysteinylglycine + L-glutamate</text>
        <dbReference type="Rhea" id="RHEA:59468"/>
        <dbReference type="ChEBI" id="CHEBI:15377"/>
        <dbReference type="ChEBI" id="CHEBI:29985"/>
        <dbReference type="ChEBI" id="CHEBI:90779"/>
        <dbReference type="ChEBI" id="CHEBI:143103"/>
        <dbReference type="EC" id="3.4.19.13"/>
    </reaction>
    <physiologicalReaction direction="left-to-right" evidence="3">
        <dbReference type="Rhea" id="RHEA:59469"/>
    </physiologicalReaction>
</comment>
<comment type="pathway">
    <text evidence="3">Sulfur metabolism; glutathione metabolism.</text>
</comment>
<comment type="subunit">
    <molecule>Isoform 3</molecule>
    <text evidence="8">Interacts with TLCD3A.</text>
</comment>
<comment type="subunit">
    <text evidence="3">Heterodimer composed of the light and heavy chains. The active site is located in the light chain.</text>
</comment>
<comment type="interaction">
    <interactant intactId="EBI-1058791">
        <id>Q9UJ14</id>
    </interactant>
    <interactant intactId="EBI-12256978">
        <id>Q8N6F1-2</id>
        <label>CLDN19</label>
    </interactant>
    <organismsDiffer>false</organismsDiffer>
    <experiments>3</experiments>
</comment>
<comment type="interaction">
    <interactant intactId="EBI-1058791">
        <id>Q9UJ14</id>
    </interactant>
    <interactant intactId="EBI-2807956">
        <id>Q96FZ5</id>
        <label>CMTM7</label>
    </interactant>
    <organismsDiffer>false</organismsDiffer>
    <experiments>3</experiments>
</comment>
<comment type="interaction">
    <interactant intactId="EBI-1058791">
        <id>Q9UJ14</id>
    </interactant>
    <interactant intactId="EBI-8646596">
        <id>P49447</id>
        <label>CYB561</label>
    </interactant>
    <organismsDiffer>false</organismsDiffer>
    <experiments>3</experiments>
</comment>
<comment type="interaction">
    <interactant intactId="EBI-1058791">
        <id>Q9UJ14</id>
    </interactant>
    <interactant intactId="EBI-10178951">
        <id>O00155</id>
        <label>GPR25</label>
    </interactant>
    <organismsDiffer>false</organismsDiffer>
    <experiments>6</experiments>
</comment>
<comment type="interaction">
    <interactant intactId="EBI-1058791">
        <id>Q9UJ14</id>
    </interactant>
    <interactant intactId="EBI-2820517">
        <id>Q8TAF8</id>
        <label>LHFPL5</label>
    </interactant>
    <organismsDiffer>false</organismsDiffer>
    <experiments>12</experiments>
</comment>
<comment type="interaction">
    <interactant intactId="EBI-1058791">
        <id>Q9UJ14</id>
    </interactant>
    <interactant intactId="EBI-12133176">
        <id>Q9UIQ6-2</id>
        <label>LNPEP</label>
    </interactant>
    <organismsDiffer>false</organismsDiffer>
    <experiments>3</experiments>
</comment>
<comment type="interaction">
    <interactant intactId="EBI-1058791">
        <id>Q9UJ14</id>
    </interactant>
    <interactant intactId="EBI-750078">
        <id>Q13021</id>
        <label>MALL</label>
    </interactant>
    <organismsDiffer>false</organismsDiffer>
    <experiments>6</experiments>
</comment>
<comment type="interaction">
    <interactant intactId="EBI-1058791">
        <id>Q9UJ14</id>
    </interactant>
    <interactant intactId="EBI-12363689">
        <id>Q96G79</id>
        <label>SLC35A4</label>
    </interactant>
    <organismsDiffer>false</organismsDiffer>
    <experiments>3</experiments>
</comment>
<comment type="interaction">
    <interactant intactId="EBI-1058791">
        <id>Q9UJ14</id>
    </interactant>
    <interactant intactId="EBI-10315004">
        <id>Q9NWH2</id>
        <label>TMEM242</label>
    </interactant>
    <organismsDiffer>false</organismsDiffer>
    <experiments>6</experiments>
</comment>
<comment type="interaction">
    <interactant intactId="EBI-1058791">
        <id>Q9UJ14</id>
    </interactant>
    <interactant intactId="EBI-12195249">
        <id>Q5TGU0</id>
        <label>TSPO2</label>
    </interactant>
    <organismsDiffer>false</organismsDiffer>
    <experiments>3</experiments>
</comment>
<comment type="subcellular location">
    <subcellularLocation>
        <location evidence="3">Membrane</location>
        <topology evidence="2">Single-pass type II membrane protein</topology>
    </subcellularLocation>
</comment>
<comment type="alternative products">
    <event type="alternative splicing"/>
    <isoform>
        <id>Q9UJ14-1</id>
        <name>1</name>
        <name>a</name>
        <sequence type="displayed"/>
    </isoform>
    <isoform>
        <id>Q9UJ14-4</id>
        <name>2</name>
        <sequence type="described" ref="VSP_008134 VSP_008138 VSP_008139"/>
    </isoform>
    <isoform>
        <id>Q9UJ14-5</id>
        <name>3</name>
        <name>GGTL3B</name>
        <name>B</name>
        <sequence type="described" ref="VSP_008136 VSP_008137"/>
    </isoform>
    <isoform>
        <id>Q9UJ14-6</id>
        <name>4</name>
        <sequence type="described" ref="VSP_008133 VSP_008140 VSP_008141"/>
    </isoform>
</comment>
<comment type="tissue specificity">
    <text>Widely expressed, but at low level, except in the airway epithelial cells. Detected in brain, heart, kidney, liver, lung, spleen, testis and trachea.</text>
</comment>
<comment type="PTM">
    <text evidence="3">Cleaved by autocatalysis into a large and a small subunit and the autocatalytic cleavage is essential to the functional activation of the enzyme.</text>
</comment>
<comment type="similarity">
    <text evidence="13">Belongs to the gamma-glutamyltransferase family.</text>
</comment>
<comment type="sequence caution" evidence="13">
    <conflict type="erroneous initiation">
        <sequence resource="EMBL-CDS" id="BAC03394"/>
    </conflict>
    <text>Extended N-terminus.</text>
</comment>
<name>GGT7_HUMAN</name>
<dbReference type="EC" id="3.4.19.13" evidence="3"/>
<dbReference type="EC" id="2.3.2.2" evidence="3"/>
<dbReference type="EMBL" id="AY138815">
    <property type="protein sequence ID" value="AAN15928.1"/>
    <property type="molecule type" value="mRNA"/>
</dbReference>
<dbReference type="EMBL" id="AK097100">
    <property type="protein sequence ID" value="BAC04950.1"/>
    <property type="molecule type" value="mRNA"/>
</dbReference>
<dbReference type="EMBL" id="AK090413">
    <property type="protein sequence ID" value="BAC03394.1"/>
    <property type="status" value="ALT_INIT"/>
    <property type="molecule type" value="mRNA"/>
</dbReference>
<dbReference type="EMBL" id="AL049709">
    <property type="status" value="NOT_ANNOTATED_CDS"/>
    <property type="molecule type" value="Genomic_DNA"/>
</dbReference>
<dbReference type="CCDS" id="CCDS13242.2">
    <molecule id="Q9UJ14-1"/>
</dbReference>
<dbReference type="RefSeq" id="NP_821158.2">
    <molecule id="Q9UJ14-1"/>
    <property type="nucleotide sequence ID" value="NM_178026.3"/>
</dbReference>
<dbReference type="SMR" id="Q9UJ14"/>
<dbReference type="BioGRID" id="108953">
    <property type="interactions" value="220"/>
</dbReference>
<dbReference type="FunCoup" id="Q9UJ14">
    <property type="interactions" value="934"/>
</dbReference>
<dbReference type="IntAct" id="Q9UJ14">
    <property type="interactions" value="99"/>
</dbReference>
<dbReference type="MINT" id="Q9UJ14"/>
<dbReference type="STRING" id="9606.ENSP00000338964"/>
<dbReference type="ChEMBL" id="CHEMBL5465368"/>
<dbReference type="MEROPS" id="T03.017"/>
<dbReference type="GlyConnect" id="1258">
    <property type="glycosylation" value="1 N-Linked glycan (1 site)"/>
</dbReference>
<dbReference type="GlyCosmos" id="Q9UJ14">
    <property type="glycosylation" value="10 sites, 1 glycan"/>
</dbReference>
<dbReference type="GlyGen" id="Q9UJ14">
    <property type="glycosylation" value="11 sites, 13 N-linked glycans (6 sites), 1 O-linked glycan (1 site)"/>
</dbReference>
<dbReference type="iPTMnet" id="Q9UJ14"/>
<dbReference type="PhosphoSitePlus" id="Q9UJ14"/>
<dbReference type="SwissPalm" id="Q9UJ14"/>
<dbReference type="BioMuta" id="GGT7"/>
<dbReference type="DMDM" id="152031612"/>
<dbReference type="CPTAC" id="CPTAC-1493"/>
<dbReference type="jPOST" id="Q9UJ14"/>
<dbReference type="MassIVE" id="Q9UJ14"/>
<dbReference type="PaxDb" id="9606-ENSP00000338964"/>
<dbReference type="PeptideAtlas" id="Q9UJ14"/>
<dbReference type="ProteomicsDB" id="84578">
    <molecule id="Q9UJ14-1"/>
</dbReference>
<dbReference type="ProteomicsDB" id="84579">
    <molecule id="Q9UJ14-4"/>
</dbReference>
<dbReference type="ProteomicsDB" id="84580">
    <molecule id="Q9UJ14-5"/>
</dbReference>
<dbReference type="Pumba" id="Q9UJ14"/>
<dbReference type="Antibodypedia" id="2429">
    <property type="antibodies" value="143 antibodies from 24 providers"/>
</dbReference>
<dbReference type="DNASU" id="2686"/>
<dbReference type="Ensembl" id="ENST00000336431.10">
    <molecule id="Q9UJ14-1"/>
    <property type="protein sequence ID" value="ENSP00000338964.5"/>
    <property type="gene ID" value="ENSG00000131067.17"/>
</dbReference>
<dbReference type="GeneID" id="2686"/>
<dbReference type="KEGG" id="hsa:2686"/>
<dbReference type="MANE-Select" id="ENST00000336431.10">
    <property type="protein sequence ID" value="ENSP00000338964.5"/>
    <property type="RefSeq nucleotide sequence ID" value="NM_178026.3"/>
    <property type="RefSeq protein sequence ID" value="NP_821158.2"/>
</dbReference>
<dbReference type="UCSC" id="uc002xay.4">
    <molecule id="Q9UJ14-1"/>
    <property type="organism name" value="human"/>
</dbReference>
<dbReference type="AGR" id="HGNC:4259"/>
<dbReference type="CTD" id="2686"/>
<dbReference type="DisGeNET" id="2686"/>
<dbReference type="GeneCards" id="GGT7"/>
<dbReference type="HGNC" id="HGNC:4259">
    <property type="gene designation" value="GGT7"/>
</dbReference>
<dbReference type="HPA" id="ENSG00000131067">
    <property type="expression patterns" value="Low tissue specificity"/>
</dbReference>
<dbReference type="MIM" id="612342">
    <property type="type" value="gene"/>
</dbReference>
<dbReference type="neXtProt" id="NX_Q9UJ14"/>
<dbReference type="OpenTargets" id="ENSG00000131067"/>
<dbReference type="PharmGKB" id="PA28669"/>
<dbReference type="VEuPathDB" id="HostDB:ENSG00000131067"/>
<dbReference type="eggNOG" id="KOG2410">
    <property type="taxonomic scope" value="Eukaryota"/>
</dbReference>
<dbReference type="GeneTree" id="ENSGT00940000156917"/>
<dbReference type="HOGENOM" id="CLU_014813_4_1_1"/>
<dbReference type="InParanoid" id="Q9UJ14"/>
<dbReference type="OMA" id="GVIICEI"/>
<dbReference type="OrthoDB" id="2015213at2759"/>
<dbReference type="PAN-GO" id="Q9UJ14">
    <property type="GO annotations" value="3 GO annotations based on evolutionary models"/>
</dbReference>
<dbReference type="PhylomeDB" id="Q9UJ14"/>
<dbReference type="TreeFam" id="TF333329"/>
<dbReference type="PathwayCommons" id="Q9UJ14"/>
<dbReference type="Reactome" id="R-HSA-174403">
    <property type="pathway name" value="Glutathione synthesis and recycling"/>
</dbReference>
<dbReference type="Reactome" id="R-HSA-5423646">
    <property type="pathway name" value="Aflatoxin activation and detoxification"/>
</dbReference>
<dbReference type="Reactome" id="R-HSA-9753281">
    <property type="pathway name" value="Paracetamol ADME"/>
</dbReference>
<dbReference type="SignaLink" id="Q9UJ14"/>
<dbReference type="UniPathway" id="UPA00204"/>
<dbReference type="BioGRID-ORCS" id="2686">
    <property type="hits" value="19 hits in 1165 CRISPR screens"/>
</dbReference>
<dbReference type="ChiTaRS" id="GGT7">
    <property type="organism name" value="human"/>
</dbReference>
<dbReference type="GeneWiki" id="GGTL3"/>
<dbReference type="GenomeRNAi" id="2686"/>
<dbReference type="Pharos" id="Q9UJ14">
    <property type="development level" value="Tbio"/>
</dbReference>
<dbReference type="PRO" id="PR:Q9UJ14"/>
<dbReference type="Proteomes" id="UP000005640">
    <property type="component" value="Chromosome 20"/>
</dbReference>
<dbReference type="RNAct" id="Q9UJ14">
    <property type="molecule type" value="protein"/>
</dbReference>
<dbReference type="Bgee" id="ENSG00000131067">
    <property type="expression patterns" value="Expressed in right hemisphere of cerebellum and 163 other cell types or tissues"/>
</dbReference>
<dbReference type="ExpressionAtlas" id="Q9UJ14">
    <property type="expression patterns" value="baseline and differential"/>
</dbReference>
<dbReference type="GO" id="GO:0005886">
    <property type="term" value="C:plasma membrane"/>
    <property type="evidence" value="ECO:0000314"/>
    <property type="project" value="UniProtKB"/>
</dbReference>
<dbReference type="GO" id="GO:0036374">
    <property type="term" value="F:glutathione hydrolase activity"/>
    <property type="evidence" value="ECO:0000318"/>
    <property type="project" value="GO_Central"/>
</dbReference>
<dbReference type="GO" id="GO:0103068">
    <property type="term" value="F:leukotriene C4 gamma-glutamyl transferase activity"/>
    <property type="evidence" value="ECO:0007669"/>
    <property type="project" value="UniProtKB-EC"/>
</dbReference>
<dbReference type="GO" id="GO:0006750">
    <property type="term" value="P:glutathione biosynthetic process"/>
    <property type="evidence" value="ECO:0007669"/>
    <property type="project" value="UniProtKB-KW"/>
</dbReference>
<dbReference type="GO" id="GO:0006751">
    <property type="term" value="P:glutathione catabolic process"/>
    <property type="evidence" value="ECO:0000318"/>
    <property type="project" value="GO_Central"/>
</dbReference>
<dbReference type="GO" id="GO:1901750">
    <property type="term" value="P:leukotriene D4 biosynthetic process"/>
    <property type="evidence" value="ECO:0000250"/>
    <property type="project" value="UniProtKB"/>
</dbReference>
<dbReference type="GO" id="GO:1902883">
    <property type="term" value="P:negative regulation of response to oxidative stress"/>
    <property type="evidence" value="ECO:0000315"/>
    <property type="project" value="UniProtKB"/>
</dbReference>
<dbReference type="FunFam" id="3.60.20.40:FF:000002">
    <property type="entry name" value="gamma-glutamyltransferase 7"/>
    <property type="match status" value="1"/>
</dbReference>
<dbReference type="FunFam" id="1.10.246.130:FF:000003">
    <property type="entry name" value="Glutathione hydrolase 7"/>
    <property type="match status" value="1"/>
</dbReference>
<dbReference type="Gene3D" id="1.10.246.130">
    <property type="match status" value="1"/>
</dbReference>
<dbReference type="Gene3D" id="3.60.20.40">
    <property type="match status" value="1"/>
</dbReference>
<dbReference type="InterPro" id="IPR043138">
    <property type="entry name" value="GGT_lsub_C"/>
</dbReference>
<dbReference type="InterPro" id="IPR000101">
    <property type="entry name" value="GGT_peptidase"/>
</dbReference>
<dbReference type="InterPro" id="IPR043137">
    <property type="entry name" value="GGT_ssub"/>
</dbReference>
<dbReference type="InterPro" id="IPR029055">
    <property type="entry name" value="Ntn_hydrolases_N"/>
</dbReference>
<dbReference type="PANTHER" id="PTHR11686">
    <property type="entry name" value="GAMMA GLUTAMYL TRANSPEPTIDASE"/>
    <property type="match status" value="1"/>
</dbReference>
<dbReference type="PANTHER" id="PTHR11686:SF54">
    <property type="entry name" value="GLUTATHIONE HYDROLASE 7"/>
    <property type="match status" value="1"/>
</dbReference>
<dbReference type="Pfam" id="PF01019">
    <property type="entry name" value="G_glu_transpept"/>
    <property type="match status" value="1"/>
</dbReference>
<dbReference type="PRINTS" id="PR01210">
    <property type="entry name" value="GGTRANSPTASE"/>
</dbReference>
<dbReference type="SUPFAM" id="SSF56235">
    <property type="entry name" value="N-terminal nucleophile aminohydrolases (Ntn hydrolases)"/>
    <property type="match status" value="1"/>
</dbReference>
<accession>Q9UJ14</accession>
<accession>Q8N899</accession>
<accession>Q8NF66</accession>
<accession>Q9BYP5</accession>
<accession>Q9BYP6</accession>
<sequence length="662" mass="70467">MAAENEASQESALGAYSPVDYMSITSFPRLPEDEPAPAAPLRGRKDEDAFLGDPDTDPDSFLKSARLQRLPSSSSEMGSQDGSPLRETRKDPFSAAAAECSCRQDGLTVIVTACLTFATGVTVALVMQIYFGDPQIFQQGAVVTDAARCTSLGIEVLSKQGSSVDAAVAAALCLGIVAPHSSGLGGGGVMLVHDIRRNESHLIDFRESAPGALREETLQRSWETKPGLLVGVPGMVKGLHEAHQLYGRLPWSQVLAFAAAVAQDGFNVTHDLARALAEQLPPNMSERFRETFLPSGRPPLPGSLLHRPDLAEVLDVLGTSGPAAFYAGGNLTLEMVAEAQHAGGVITEEDFSNYSALVEKPVCGVYRGHLVLSPPPPHTGPALISALNILEGFNLTSLVSREQALHWVAETLKIALALASRLGDPVYDSTITESMDDMLSKVEAAYLRGHINDSQAAPAPLLPVYELDGAPTAAQVLIMGPDDFIVAMVSSLNQPFGSGLITPSGILLNSQMLDFSWPNRTANHSAPSLENSVQPGKRPLSFLLPTVVRPAEGLCGTYLALGANGAARGLSGLTQVLLNVLTLNRNLSDSLARGRLHPDLQSNLLQVDSEFTEEEIEFLEARGHHVEKVDVLSWVHGSRRTNNFIIAVKDPRSPDAAGATIL</sequence>
<keyword id="KW-0012">Acyltransferase</keyword>
<keyword id="KW-0025">Alternative splicing</keyword>
<keyword id="KW-0317">Glutathione biosynthesis</keyword>
<keyword id="KW-0325">Glycoprotein</keyword>
<keyword id="KW-0378">Hydrolase</keyword>
<keyword id="KW-0472">Membrane</keyword>
<keyword id="KW-0597">Phosphoprotein</keyword>
<keyword id="KW-1267">Proteomics identification</keyword>
<keyword id="KW-1185">Reference proteome</keyword>
<keyword id="KW-0735">Signal-anchor</keyword>
<keyword id="KW-0808">Transferase</keyword>
<keyword id="KW-0812">Transmembrane</keyword>
<keyword id="KW-1133">Transmembrane helix</keyword>
<keyword id="KW-0865">Zymogen</keyword>
<reference key="1">
    <citation type="journal article" date="2002" name="Biochem. Biophys. Res. Commun.">
        <title>Molecular cloning and characterization of CT120, a novel membrane-associated gene involved in amino acid transport and glutathione metabolism.</title>
        <authorList>
            <person name="He X.H."/>
            <person name="Di Y."/>
            <person name="Li J."/>
            <person name="Xie Y."/>
            <person name="Tang Y."/>
            <person name="Zhang F."/>
            <person name="Wei L."/>
            <person name="Zhang Y."/>
            <person name="Qin W.X."/>
            <person name="Huo K."/>
            <person name="Li Y."/>
            <person name="Wan D.F."/>
            <person name="Gu J.R."/>
        </authorList>
    </citation>
    <scope>NUCLEOTIDE SEQUENCE [MRNA] (ISOFORM 3)</scope>
    <scope>INTERACTION WITH TLCD3A</scope>
</reference>
<reference key="2">
    <citation type="journal article" date="2004" name="Nat. Genet.">
        <title>Complete sequencing and characterization of 21,243 full-length human cDNAs.</title>
        <authorList>
            <person name="Ota T."/>
            <person name="Suzuki Y."/>
            <person name="Nishikawa T."/>
            <person name="Otsuki T."/>
            <person name="Sugiyama T."/>
            <person name="Irie R."/>
            <person name="Wakamatsu A."/>
            <person name="Hayashi K."/>
            <person name="Sato H."/>
            <person name="Nagai K."/>
            <person name="Kimura K."/>
            <person name="Makita H."/>
            <person name="Sekine M."/>
            <person name="Obayashi M."/>
            <person name="Nishi T."/>
            <person name="Shibahara T."/>
            <person name="Tanaka T."/>
            <person name="Ishii S."/>
            <person name="Yamamoto J."/>
            <person name="Saito K."/>
            <person name="Kawai Y."/>
            <person name="Isono Y."/>
            <person name="Nakamura Y."/>
            <person name="Nagahari K."/>
            <person name="Murakami K."/>
            <person name="Yasuda T."/>
            <person name="Iwayanagi T."/>
            <person name="Wagatsuma M."/>
            <person name="Shiratori A."/>
            <person name="Sudo H."/>
            <person name="Hosoiri T."/>
            <person name="Kaku Y."/>
            <person name="Kodaira H."/>
            <person name="Kondo H."/>
            <person name="Sugawara M."/>
            <person name="Takahashi M."/>
            <person name="Kanda K."/>
            <person name="Yokoi T."/>
            <person name="Furuya T."/>
            <person name="Kikkawa E."/>
            <person name="Omura Y."/>
            <person name="Abe K."/>
            <person name="Kamihara K."/>
            <person name="Katsuta N."/>
            <person name="Sato K."/>
            <person name="Tanikawa M."/>
            <person name="Yamazaki M."/>
            <person name="Ninomiya K."/>
            <person name="Ishibashi T."/>
            <person name="Yamashita H."/>
            <person name="Murakawa K."/>
            <person name="Fujimori K."/>
            <person name="Tanai H."/>
            <person name="Kimata M."/>
            <person name="Watanabe M."/>
            <person name="Hiraoka S."/>
            <person name="Chiba Y."/>
            <person name="Ishida S."/>
            <person name="Ono Y."/>
            <person name="Takiguchi S."/>
            <person name="Watanabe S."/>
            <person name="Yosida M."/>
            <person name="Hotuta T."/>
            <person name="Kusano J."/>
            <person name="Kanehori K."/>
            <person name="Takahashi-Fujii A."/>
            <person name="Hara H."/>
            <person name="Tanase T.-O."/>
            <person name="Nomura Y."/>
            <person name="Togiya S."/>
            <person name="Komai F."/>
            <person name="Hara R."/>
            <person name="Takeuchi K."/>
            <person name="Arita M."/>
            <person name="Imose N."/>
            <person name="Musashino K."/>
            <person name="Yuuki H."/>
            <person name="Oshima A."/>
            <person name="Sasaki N."/>
            <person name="Aotsuka S."/>
            <person name="Yoshikawa Y."/>
            <person name="Matsunawa H."/>
            <person name="Ichihara T."/>
            <person name="Shiohata N."/>
            <person name="Sano S."/>
            <person name="Moriya S."/>
            <person name="Momiyama H."/>
            <person name="Satoh N."/>
            <person name="Takami S."/>
            <person name="Terashima Y."/>
            <person name="Suzuki O."/>
            <person name="Nakagawa S."/>
            <person name="Senoh A."/>
            <person name="Mizoguchi H."/>
            <person name="Goto Y."/>
            <person name="Shimizu F."/>
            <person name="Wakebe H."/>
            <person name="Hishigaki H."/>
            <person name="Watanabe T."/>
            <person name="Sugiyama A."/>
            <person name="Takemoto M."/>
            <person name="Kawakami B."/>
            <person name="Yamazaki M."/>
            <person name="Watanabe K."/>
            <person name="Kumagai A."/>
            <person name="Itakura S."/>
            <person name="Fukuzumi Y."/>
            <person name="Fujimori Y."/>
            <person name="Komiyama M."/>
            <person name="Tashiro H."/>
            <person name="Tanigami A."/>
            <person name="Fujiwara T."/>
            <person name="Ono T."/>
            <person name="Yamada K."/>
            <person name="Fujii Y."/>
            <person name="Ozaki K."/>
            <person name="Hirao M."/>
            <person name="Ohmori Y."/>
            <person name="Kawabata A."/>
            <person name="Hikiji T."/>
            <person name="Kobatake N."/>
            <person name="Inagaki H."/>
            <person name="Ikema Y."/>
            <person name="Okamoto S."/>
            <person name="Okitani R."/>
            <person name="Kawakami T."/>
            <person name="Noguchi S."/>
            <person name="Itoh T."/>
            <person name="Shigeta K."/>
            <person name="Senba T."/>
            <person name="Matsumura K."/>
            <person name="Nakajima Y."/>
            <person name="Mizuno T."/>
            <person name="Morinaga M."/>
            <person name="Sasaki M."/>
            <person name="Togashi T."/>
            <person name="Oyama M."/>
            <person name="Hata H."/>
            <person name="Watanabe M."/>
            <person name="Komatsu T."/>
            <person name="Mizushima-Sugano J."/>
            <person name="Satoh T."/>
            <person name="Shirai Y."/>
            <person name="Takahashi Y."/>
            <person name="Nakagawa K."/>
            <person name="Okumura K."/>
            <person name="Nagase T."/>
            <person name="Nomura N."/>
            <person name="Kikuchi H."/>
            <person name="Masuho Y."/>
            <person name="Yamashita R."/>
            <person name="Nakai K."/>
            <person name="Yada T."/>
            <person name="Nakamura Y."/>
            <person name="Ohara O."/>
            <person name="Isogai T."/>
            <person name="Sugano S."/>
        </authorList>
    </citation>
    <scope>NUCLEOTIDE SEQUENCE [LARGE SCALE MRNA] (ISOFORM 2)</scope>
    <source>
        <tissue>Spleen</tissue>
    </source>
</reference>
<reference key="3">
    <citation type="journal article" date="2003" name="DNA Res.">
        <title>Characterization of long cDNA clones from human adult spleen. II. The complete sequences of 81 cDNA clones.</title>
        <authorList>
            <person name="Jikuya H."/>
            <person name="Takano J."/>
            <person name="Kikuno R."/>
            <person name="Hirosawa M."/>
            <person name="Nagase T."/>
            <person name="Nomura N."/>
            <person name="Ohara O."/>
        </authorList>
    </citation>
    <scope>NUCLEOTIDE SEQUENCE [LARGE SCALE MRNA] (ISOFORM 4)</scope>
    <source>
        <tissue>Spleen</tissue>
    </source>
</reference>
<reference key="4">
    <citation type="journal article" date="2001" name="Nature">
        <title>The DNA sequence and comparative analysis of human chromosome 20.</title>
        <authorList>
            <person name="Deloukas P."/>
            <person name="Matthews L.H."/>
            <person name="Ashurst J.L."/>
            <person name="Burton J."/>
            <person name="Gilbert J.G.R."/>
            <person name="Jones M."/>
            <person name="Stavrides G."/>
            <person name="Almeida J.P."/>
            <person name="Babbage A.K."/>
            <person name="Bagguley C.L."/>
            <person name="Bailey J."/>
            <person name="Barlow K.F."/>
            <person name="Bates K.N."/>
            <person name="Beard L.M."/>
            <person name="Beare D.M."/>
            <person name="Beasley O.P."/>
            <person name="Bird C.P."/>
            <person name="Blakey S.E."/>
            <person name="Bridgeman A.M."/>
            <person name="Brown A.J."/>
            <person name="Buck D."/>
            <person name="Burrill W.D."/>
            <person name="Butler A.P."/>
            <person name="Carder C."/>
            <person name="Carter N.P."/>
            <person name="Chapman J.C."/>
            <person name="Clamp M."/>
            <person name="Clark G."/>
            <person name="Clark L.N."/>
            <person name="Clark S.Y."/>
            <person name="Clee C.M."/>
            <person name="Clegg S."/>
            <person name="Cobley V.E."/>
            <person name="Collier R.E."/>
            <person name="Connor R.E."/>
            <person name="Corby N.R."/>
            <person name="Coulson A."/>
            <person name="Coville G.J."/>
            <person name="Deadman R."/>
            <person name="Dhami P.D."/>
            <person name="Dunn M."/>
            <person name="Ellington A.G."/>
            <person name="Frankland J.A."/>
            <person name="Fraser A."/>
            <person name="French L."/>
            <person name="Garner P."/>
            <person name="Grafham D.V."/>
            <person name="Griffiths C."/>
            <person name="Griffiths M.N.D."/>
            <person name="Gwilliam R."/>
            <person name="Hall R.E."/>
            <person name="Hammond S."/>
            <person name="Harley J.L."/>
            <person name="Heath P.D."/>
            <person name="Ho S."/>
            <person name="Holden J.L."/>
            <person name="Howden P.J."/>
            <person name="Huckle E."/>
            <person name="Hunt A.R."/>
            <person name="Hunt S.E."/>
            <person name="Jekosch K."/>
            <person name="Johnson C.M."/>
            <person name="Johnson D."/>
            <person name="Kay M.P."/>
            <person name="Kimberley A.M."/>
            <person name="King A."/>
            <person name="Knights A."/>
            <person name="Laird G.K."/>
            <person name="Lawlor S."/>
            <person name="Lehvaeslaiho M.H."/>
            <person name="Leversha M.A."/>
            <person name="Lloyd C."/>
            <person name="Lloyd D.M."/>
            <person name="Lovell J.D."/>
            <person name="Marsh V.L."/>
            <person name="Martin S.L."/>
            <person name="McConnachie L.J."/>
            <person name="McLay K."/>
            <person name="McMurray A.A."/>
            <person name="Milne S.A."/>
            <person name="Mistry D."/>
            <person name="Moore M.J.F."/>
            <person name="Mullikin J.C."/>
            <person name="Nickerson T."/>
            <person name="Oliver K."/>
            <person name="Parker A."/>
            <person name="Patel R."/>
            <person name="Pearce T.A.V."/>
            <person name="Peck A.I."/>
            <person name="Phillimore B.J.C.T."/>
            <person name="Prathalingam S.R."/>
            <person name="Plumb R.W."/>
            <person name="Ramsay H."/>
            <person name="Rice C.M."/>
            <person name="Ross M.T."/>
            <person name="Scott C.E."/>
            <person name="Sehra H.K."/>
            <person name="Shownkeen R."/>
            <person name="Sims S."/>
            <person name="Skuce C.D."/>
            <person name="Smith M.L."/>
            <person name="Soderlund C."/>
            <person name="Steward C.A."/>
            <person name="Sulston J.E."/>
            <person name="Swann R.M."/>
            <person name="Sycamore N."/>
            <person name="Taylor R."/>
            <person name="Tee L."/>
            <person name="Thomas D.W."/>
            <person name="Thorpe A."/>
            <person name="Tracey A."/>
            <person name="Tromans A.C."/>
            <person name="Vaudin M."/>
            <person name="Wall M."/>
            <person name="Wallis J.M."/>
            <person name="Whitehead S.L."/>
            <person name="Whittaker P."/>
            <person name="Willey D.L."/>
            <person name="Williams L."/>
            <person name="Williams S.A."/>
            <person name="Wilming L."/>
            <person name="Wray P.W."/>
            <person name="Hubbard T."/>
            <person name="Durbin R.M."/>
            <person name="Bentley D.R."/>
            <person name="Beck S."/>
            <person name="Rogers J."/>
        </authorList>
    </citation>
    <scope>NUCLEOTIDE SEQUENCE [LARGE SCALE GENOMIC DNA]</scope>
</reference>
<reference key="5">
    <citation type="journal article" date="2008" name="Hum. Genet.">
        <title>The human gamma-glutamyltransferase gene family.</title>
        <authorList>
            <person name="Heisterkamp N."/>
            <person name="Groffen J."/>
            <person name="Warburton D."/>
            <person name="Sneddon T.P."/>
        </authorList>
    </citation>
    <scope>NOMENCLATURE</scope>
</reference>
<reference key="6">
    <citation type="journal article" date="2009" name="Anal. Chem.">
        <title>Lys-N and trypsin cover complementary parts of the phosphoproteome in a refined SCX-based approach.</title>
        <authorList>
            <person name="Gauci S."/>
            <person name="Helbig A.O."/>
            <person name="Slijper M."/>
            <person name="Krijgsveld J."/>
            <person name="Heck A.J."/>
            <person name="Mohammed S."/>
        </authorList>
    </citation>
    <scope>IDENTIFICATION BY MASS SPECTROMETRY [LARGE SCALE ANALYSIS]</scope>
</reference>
<reference key="7">
    <citation type="journal article" date="2013" name="J. Proteome Res.">
        <title>Toward a comprehensive characterization of a human cancer cell phosphoproteome.</title>
        <authorList>
            <person name="Zhou H."/>
            <person name="Di Palma S."/>
            <person name="Preisinger C."/>
            <person name="Peng M."/>
            <person name="Polat A.N."/>
            <person name="Heck A.J."/>
            <person name="Mohammed S."/>
        </authorList>
    </citation>
    <scope>PHOSPHORYLATION [LARGE SCALE ANALYSIS] AT SER-72</scope>
    <scope>IDENTIFICATION BY MASS SPECTROMETRY [LARGE SCALE ANALYSIS]</scope>
    <source>
        <tissue>Erythroleukemia</tissue>
    </source>
</reference>
<feature type="chain" id="PRO_0000011066" description="Glutathione hydrolase 7 heavy chain" evidence="1">
    <location>
        <begin position="1"/>
        <end position="472"/>
    </location>
</feature>
<feature type="chain" id="PRO_0000011067" description="Glutathione hydrolase 7 light chain" evidence="1">
    <location>
        <begin position="473"/>
        <end position="662"/>
    </location>
</feature>
<feature type="topological domain" description="Cytoplasmic" evidence="2">
    <location>
        <begin position="1"/>
        <end position="106"/>
    </location>
</feature>
<feature type="transmembrane region" description="Helical; Signal-anchor for type II membrane protein" evidence="6">
    <location>
        <begin position="107"/>
        <end position="127"/>
    </location>
</feature>
<feature type="topological domain" description="Extracellular" evidence="2">
    <location>
        <begin position="128"/>
        <end position="662"/>
    </location>
</feature>
<feature type="region of interest" description="Disordered" evidence="7">
    <location>
        <begin position="26"/>
        <end position="90"/>
    </location>
</feature>
<feature type="compositionally biased region" description="Low complexity" evidence="7">
    <location>
        <begin position="72"/>
        <end position="83"/>
    </location>
</feature>
<feature type="modified residue" description="Phosphoserine" evidence="5">
    <location>
        <position position="17"/>
    </location>
</feature>
<feature type="modified residue" description="Phosphoserine" evidence="15">
    <location>
        <position position="72"/>
    </location>
</feature>
<feature type="modified residue" description="Phosphoserine" evidence="4">
    <location>
        <position position="79"/>
    </location>
</feature>
<feature type="modified residue" description="Phosphoserine" evidence="4">
    <location>
        <position position="83"/>
    </location>
</feature>
<feature type="glycosylation site" description="N-linked (GlcNAc...) asparagine" evidence="6">
    <location>
        <position position="198"/>
    </location>
</feature>
<feature type="glycosylation site" description="N-linked (GlcNAc...) asparagine" evidence="6">
    <location>
        <position position="267"/>
    </location>
</feature>
<feature type="glycosylation site" description="N-linked (GlcNAc...) asparagine" evidence="6">
    <location>
        <position position="283"/>
    </location>
</feature>
<feature type="glycosylation site" description="N-linked (GlcNAc...) asparagine" evidence="6">
    <location>
        <position position="330"/>
    </location>
</feature>
<feature type="glycosylation site" description="N-linked (GlcNAc...) asparagine" evidence="6">
    <location>
        <position position="353"/>
    </location>
</feature>
<feature type="glycosylation site" description="N-linked (GlcNAc...) asparagine" evidence="6">
    <location>
        <position position="394"/>
    </location>
</feature>
<feature type="glycosylation site" description="N-linked (GlcNAc...) asparagine" evidence="6">
    <location>
        <position position="452"/>
    </location>
</feature>
<feature type="glycosylation site" description="N-linked (GlcNAc...) asparagine" evidence="6">
    <location>
        <position position="519"/>
    </location>
</feature>
<feature type="glycosylation site" description="N-linked (GlcNAc...) asparagine" evidence="6">
    <location>
        <position position="523"/>
    </location>
</feature>
<feature type="glycosylation site" description="N-linked (GlcNAc...) asparagine" evidence="6">
    <location>
        <position position="586"/>
    </location>
</feature>
<feature type="splice variant" id="VSP_008133" description="In isoform 4." evidence="10">
    <location>
        <begin position="1"/>
        <end position="283"/>
    </location>
</feature>
<feature type="splice variant" id="VSP_008134" description="In isoform 2." evidence="11">
    <location>
        <begin position="1"/>
        <end position="76"/>
    </location>
</feature>
<feature type="splice variant" id="VSP_008136" description="In isoform 3." evidence="9">
    <original>PGLLVGVPGMVKGLHEAHQLYGRLPW</original>
    <variation>VGTLVRRESSGESLFIALLLTQALIC</variation>
    <location>
        <begin position="226"/>
        <end position="251"/>
    </location>
</feature>
<feature type="splice variant" id="VSP_008137" description="In isoform 3." evidence="9">
    <location>
        <begin position="252"/>
        <end position="662"/>
    </location>
</feature>
<feature type="splice variant" id="VSP_008138" description="In isoform 2." evidence="11">
    <original>ARALAEQLPPNMSERFR</original>
    <variation>GQWGLGIWERHEVDGEG</variation>
    <location>
        <begin position="273"/>
        <end position="289"/>
    </location>
</feature>
<feature type="splice variant" id="VSP_008139" description="In isoform 2." evidence="11">
    <location>
        <begin position="290"/>
        <end position="662"/>
    </location>
</feature>
<feature type="splice variant" id="VSP_008140" description="In isoform 4." evidence="10">
    <original>HLVLSPPPPHTGPALISALNILEGFNLTSLVSREQALHWVAETLKIALALASRLGDP</original>
    <variation>DLSPGSQGPPSGEASQSMATSFWPRDSSPFHRRETKAVSYLGSQLLKQTRVSPPSEK</variation>
    <location>
        <begin position="369"/>
        <end position="425"/>
    </location>
</feature>
<feature type="splice variant" id="VSP_008141" description="In isoform 4." evidence="10">
    <location>
        <begin position="426"/>
        <end position="662"/>
    </location>
</feature>
<feature type="sequence conflict" description="In Ref. 1; AAN15928." evidence="13" ref="1">
    <original>N</original>
    <variation>K</variation>
    <location>
        <position position="5"/>
    </location>
</feature>
<protein>
    <recommendedName>
        <fullName evidence="12">Glutathione hydrolase 7</fullName>
        <ecNumber evidence="3">3.4.19.13</ecNumber>
    </recommendedName>
    <alternativeName>
        <fullName>Gamma-glutamyltransferase 7</fullName>
        <shortName>GGT 7</shortName>
        <ecNumber evidence="3">2.3.2.2</ecNumber>
    </alternativeName>
    <alternativeName>
        <fullName>Gamma-glutamyltransferase-like 3</fullName>
    </alternativeName>
    <alternativeName>
        <fullName>Gamma-glutamyltransferase-like 5</fullName>
    </alternativeName>
    <alternativeName>
        <fullName>Gamma-glutamyltranspeptidase 7</fullName>
    </alternativeName>
    <component>
        <recommendedName>
            <fullName>Glutathione hydrolase 7 heavy chain</fullName>
        </recommendedName>
    </component>
    <component>
        <recommendedName>
            <fullName>Glutathione hydrolase 7 light chain</fullName>
        </recommendedName>
    </component>
</protein>